<evidence type="ECO:0000255" key="1">
    <source>
        <dbReference type="PROSITE-ProRule" id="PRU00307"/>
    </source>
</evidence>
<evidence type="ECO:0000269" key="2">
    <source>
    </source>
</evidence>
<proteinExistence type="evidence at transcript level"/>
<gene>
    <name type="primary">ytrA</name>
    <name type="ordered locus">BSU30460</name>
</gene>
<accession>O34712</accession>
<accession>Q795Q0</accession>
<dbReference type="EMBL" id="AF008220">
    <property type="protein sequence ID" value="AAC00247.1"/>
    <property type="molecule type" value="Genomic_DNA"/>
</dbReference>
<dbReference type="EMBL" id="AL009126">
    <property type="protein sequence ID" value="CAB15024.1"/>
    <property type="molecule type" value="Genomic_DNA"/>
</dbReference>
<dbReference type="PIR" id="G69999">
    <property type="entry name" value="G69999"/>
</dbReference>
<dbReference type="RefSeq" id="NP_390924.1">
    <property type="nucleotide sequence ID" value="NC_000964.3"/>
</dbReference>
<dbReference type="RefSeq" id="WP_003229121.1">
    <property type="nucleotide sequence ID" value="NZ_OZ025638.1"/>
</dbReference>
<dbReference type="SMR" id="O34712"/>
<dbReference type="FunCoup" id="O34712">
    <property type="interactions" value="72"/>
</dbReference>
<dbReference type="STRING" id="224308.BSU30460"/>
<dbReference type="PaxDb" id="224308-BSU30460"/>
<dbReference type="EnsemblBacteria" id="CAB15024">
    <property type="protein sequence ID" value="CAB15024"/>
    <property type="gene ID" value="BSU_30460"/>
</dbReference>
<dbReference type="GeneID" id="937244"/>
<dbReference type="KEGG" id="bsu:BSU30460"/>
<dbReference type="PATRIC" id="fig|224308.179.peg.3303"/>
<dbReference type="eggNOG" id="COG1725">
    <property type="taxonomic scope" value="Bacteria"/>
</dbReference>
<dbReference type="InParanoid" id="O34712"/>
<dbReference type="OrthoDB" id="9801546at2"/>
<dbReference type="PhylomeDB" id="O34712"/>
<dbReference type="BioCyc" id="BSUB:BSU30460-MONOMER"/>
<dbReference type="Proteomes" id="UP000001570">
    <property type="component" value="Chromosome"/>
</dbReference>
<dbReference type="GO" id="GO:0003677">
    <property type="term" value="F:DNA binding"/>
    <property type="evidence" value="ECO:0007669"/>
    <property type="project" value="UniProtKB-KW"/>
</dbReference>
<dbReference type="GO" id="GO:0003700">
    <property type="term" value="F:DNA-binding transcription factor activity"/>
    <property type="evidence" value="ECO:0007669"/>
    <property type="project" value="InterPro"/>
</dbReference>
<dbReference type="CDD" id="cd07377">
    <property type="entry name" value="WHTH_GntR"/>
    <property type="match status" value="1"/>
</dbReference>
<dbReference type="Gene3D" id="1.10.10.10">
    <property type="entry name" value="Winged helix-like DNA-binding domain superfamily/Winged helix DNA-binding domain"/>
    <property type="match status" value="1"/>
</dbReference>
<dbReference type="InterPro" id="IPR000524">
    <property type="entry name" value="Tscrpt_reg_HTH_GntR"/>
</dbReference>
<dbReference type="InterPro" id="IPR036388">
    <property type="entry name" value="WH-like_DNA-bd_sf"/>
</dbReference>
<dbReference type="InterPro" id="IPR036390">
    <property type="entry name" value="WH_DNA-bd_sf"/>
</dbReference>
<dbReference type="PANTHER" id="PTHR38445">
    <property type="entry name" value="HTH-TYPE TRANSCRIPTIONAL REPRESSOR YTRA"/>
    <property type="match status" value="1"/>
</dbReference>
<dbReference type="PANTHER" id="PTHR38445:SF9">
    <property type="entry name" value="HTH-TYPE TRANSCRIPTIONAL REPRESSOR YTRA"/>
    <property type="match status" value="1"/>
</dbReference>
<dbReference type="Pfam" id="PF00392">
    <property type="entry name" value="GntR"/>
    <property type="match status" value="1"/>
</dbReference>
<dbReference type="SMART" id="SM00345">
    <property type="entry name" value="HTH_GNTR"/>
    <property type="match status" value="1"/>
</dbReference>
<dbReference type="SUPFAM" id="SSF46785">
    <property type="entry name" value="Winged helix' DNA-binding domain"/>
    <property type="match status" value="1"/>
</dbReference>
<dbReference type="PROSITE" id="PS50949">
    <property type="entry name" value="HTH_GNTR"/>
    <property type="match status" value="1"/>
</dbReference>
<name>YTRA_BACSU</name>
<sequence>MIQIDPRSSTPIYEQIIQQMKELCLKGIMKPGDKLPSVRELATIIIANPNTVSKAYKELEREGIIETLRGRGTYISENAKTTLVEGKMTMIKEQLKQLIIDAHYAGVELEKLHEWIKEISADVKGGKKND</sequence>
<feature type="chain" id="PRO_0000360730" description="HTH-type transcriptional repressor YtrA">
    <location>
        <begin position="1"/>
        <end position="130"/>
    </location>
</feature>
<feature type="domain" description="HTH gntR-type" evidence="1">
    <location>
        <begin position="10"/>
        <end position="78"/>
    </location>
</feature>
<feature type="DNA-binding region" description="H-T-H motif" evidence="1">
    <location>
        <begin position="38"/>
        <end position="57"/>
    </location>
</feature>
<keyword id="KW-0238">DNA-binding</keyword>
<keyword id="KW-1185">Reference proteome</keyword>
<keyword id="KW-0678">Repressor</keyword>
<keyword id="KW-0804">Transcription</keyword>
<keyword id="KW-0805">Transcription regulation</keyword>
<reference key="1">
    <citation type="journal article" date="1997" name="Microbiology">
        <title>Sequencing and functional annotation of the Bacillus subtilis genes in the 200 kb rrnB-dnaB region.</title>
        <authorList>
            <person name="Lapidus A."/>
            <person name="Galleron N."/>
            <person name="Sorokin A."/>
            <person name="Ehrlich S.D."/>
        </authorList>
    </citation>
    <scope>NUCLEOTIDE SEQUENCE [GENOMIC DNA]</scope>
    <source>
        <strain>168</strain>
    </source>
</reference>
<reference key="2">
    <citation type="journal article" date="1997" name="Nature">
        <title>The complete genome sequence of the Gram-positive bacterium Bacillus subtilis.</title>
        <authorList>
            <person name="Kunst F."/>
            <person name="Ogasawara N."/>
            <person name="Moszer I."/>
            <person name="Albertini A.M."/>
            <person name="Alloni G."/>
            <person name="Azevedo V."/>
            <person name="Bertero M.G."/>
            <person name="Bessieres P."/>
            <person name="Bolotin A."/>
            <person name="Borchert S."/>
            <person name="Borriss R."/>
            <person name="Boursier L."/>
            <person name="Brans A."/>
            <person name="Braun M."/>
            <person name="Brignell S.C."/>
            <person name="Bron S."/>
            <person name="Brouillet S."/>
            <person name="Bruschi C.V."/>
            <person name="Caldwell B."/>
            <person name="Capuano V."/>
            <person name="Carter N.M."/>
            <person name="Choi S.-K."/>
            <person name="Codani J.-J."/>
            <person name="Connerton I.F."/>
            <person name="Cummings N.J."/>
            <person name="Daniel R.A."/>
            <person name="Denizot F."/>
            <person name="Devine K.M."/>
            <person name="Duesterhoeft A."/>
            <person name="Ehrlich S.D."/>
            <person name="Emmerson P.T."/>
            <person name="Entian K.-D."/>
            <person name="Errington J."/>
            <person name="Fabret C."/>
            <person name="Ferrari E."/>
            <person name="Foulger D."/>
            <person name="Fritz C."/>
            <person name="Fujita M."/>
            <person name="Fujita Y."/>
            <person name="Fuma S."/>
            <person name="Galizzi A."/>
            <person name="Galleron N."/>
            <person name="Ghim S.-Y."/>
            <person name="Glaser P."/>
            <person name="Goffeau A."/>
            <person name="Golightly E.J."/>
            <person name="Grandi G."/>
            <person name="Guiseppi G."/>
            <person name="Guy B.J."/>
            <person name="Haga K."/>
            <person name="Haiech J."/>
            <person name="Harwood C.R."/>
            <person name="Henaut A."/>
            <person name="Hilbert H."/>
            <person name="Holsappel S."/>
            <person name="Hosono S."/>
            <person name="Hullo M.-F."/>
            <person name="Itaya M."/>
            <person name="Jones L.-M."/>
            <person name="Joris B."/>
            <person name="Karamata D."/>
            <person name="Kasahara Y."/>
            <person name="Klaerr-Blanchard M."/>
            <person name="Klein C."/>
            <person name="Kobayashi Y."/>
            <person name="Koetter P."/>
            <person name="Koningstein G."/>
            <person name="Krogh S."/>
            <person name="Kumano M."/>
            <person name="Kurita K."/>
            <person name="Lapidus A."/>
            <person name="Lardinois S."/>
            <person name="Lauber J."/>
            <person name="Lazarevic V."/>
            <person name="Lee S.-M."/>
            <person name="Levine A."/>
            <person name="Liu H."/>
            <person name="Masuda S."/>
            <person name="Mauel C."/>
            <person name="Medigue C."/>
            <person name="Medina N."/>
            <person name="Mellado R.P."/>
            <person name="Mizuno M."/>
            <person name="Moestl D."/>
            <person name="Nakai S."/>
            <person name="Noback M."/>
            <person name="Noone D."/>
            <person name="O'Reilly M."/>
            <person name="Ogawa K."/>
            <person name="Ogiwara A."/>
            <person name="Oudega B."/>
            <person name="Park S.-H."/>
            <person name="Parro V."/>
            <person name="Pohl T.M."/>
            <person name="Portetelle D."/>
            <person name="Porwollik S."/>
            <person name="Prescott A.M."/>
            <person name="Presecan E."/>
            <person name="Pujic P."/>
            <person name="Purnelle B."/>
            <person name="Rapoport G."/>
            <person name="Rey M."/>
            <person name="Reynolds S."/>
            <person name="Rieger M."/>
            <person name="Rivolta C."/>
            <person name="Rocha E."/>
            <person name="Roche B."/>
            <person name="Rose M."/>
            <person name="Sadaie Y."/>
            <person name="Sato T."/>
            <person name="Scanlan E."/>
            <person name="Schleich S."/>
            <person name="Schroeter R."/>
            <person name="Scoffone F."/>
            <person name="Sekiguchi J."/>
            <person name="Sekowska A."/>
            <person name="Seror S.J."/>
            <person name="Serror P."/>
            <person name="Shin B.-S."/>
            <person name="Soldo B."/>
            <person name="Sorokin A."/>
            <person name="Tacconi E."/>
            <person name="Takagi T."/>
            <person name="Takahashi H."/>
            <person name="Takemaru K."/>
            <person name="Takeuchi M."/>
            <person name="Tamakoshi A."/>
            <person name="Tanaka T."/>
            <person name="Terpstra P."/>
            <person name="Tognoni A."/>
            <person name="Tosato V."/>
            <person name="Uchiyama S."/>
            <person name="Vandenbol M."/>
            <person name="Vannier F."/>
            <person name="Vassarotti A."/>
            <person name="Viari A."/>
            <person name="Wambutt R."/>
            <person name="Wedler E."/>
            <person name="Wedler H."/>
            <person name="Weitzenegger T."/>
            <person name="Winters P."/>
            <person name="Wipat A."/>
            <person name="Yamamoto H."/>
            <person name="Yamane K."/>
            <person name="Yasumoto K."/>
            <person name="Yata K."/>
            <person name="Yoshida K."/>
            <person name="Yoshikawa H.-F."/>
            <person name="Zumstein E."/>
            <person name="Yoshikawa H."/>
            <person name="Danchin A."/>
        </authorList>
    </citation>
    <scope>NUCLEOTIDE SEQUENCE [LARGE SCALE GENOMIC DNA]</scope>
    <source>
        <strain>168</strain>
    </source>
</reference>
<reference key="3">
    <citation type="journal article" date="2000" name="J. Bacteriol.">
        <title>An operon for a putative ATP-binding cassette transport system involved in acetoin utilization of Bacillus subtilis.</title>
        <authorList>
            <person name="Yoshida K."/>
            <person name="Fujita Y."/>
            <person name="Ehrlich S.D."/>
        </authorList>
    </citation>
    <scope>FUNCTION</scope>
    <scope>DEVELOPMENTAL STAGE</scope>
</reference>
<protein>
    <recommendedName>
        <fullName>HTH-type transcriptional repressor YtrA</fullName>
    </recommendedName>
</protein>
<comment type="function">
    <text evidence="2">Negatively regulates ABC transporter complex ytrBCDEF that plays a role in acetoin utilization during stationary phase and sporulation.</text>
</comment>
<comment type="developmental stage">
    <text evidence="2">Expressed early in the stationary phase.</text>
</comment>
<organism>
    <name type="scientific">Bacillus subtilis (strain 168)</name>
    <dbReference type="NCBI Taxonomy" id="224308"/>
    <lineage>
        <taxon>Bacteria</taxon>
        <taxon>Bacillati</taxon>
        <taxon>Bacillota</taxon>
        <taxon>Bacilli</taxon>
        <taxon>Bacillales</taxon>
        <taxon>Bacillaceae</taxon>
        <taxon>Bacillus</taxon>
    </lineage>
</organism>